<dbReference type="EMBL" id="CP000378">
    <property type="protein sequence ID" value="ABF74983.1"/>
    <property type="molecule type" value="Genomic_DNA"/>
</dbReference>
<dbReference type="SMR" id="Q1BZH2"/>
<dbReference type="HOGENOM" id="CLU_107907_2_1_4"/>
<dbReference type="GO" id="GO:0005737">
    <property type="term" value="C:cytoplasm"/>
    <property type="evidence" value="ECO:0007669"/>
    <property type="project" value="UniProtKB-UniRule"/>
</dbReference>
<dbReference type="GO" id="GO:0009295">
    <property type="term" value="C:nucleoid"/>
    <property type="evidence" value="ECO:0007669"/>
    <property type="project" value="UniProtKB-SubCell"/>
</dbReference>
<dbReference type="GO" id="GO:0003700">
    <property type="term" value="F:DNA-binding transcription factor activity"/>
    <property type="evidence" value="ECO:0007669"/>
    <property type="project" value="UniProtKB-UniRule"/>
</dbReference>
<dbReference type="GO" id="GO:0000976">
    <property type="term" value="F:transcription cis-regulatory region binding"/>
    <property type="evidence" value="ECO:0007669"/>
    <property type="project" value="TreeGrafter"/>
</dbReference>
<dbReference type="GO" id="GO:2000143">
    <property type="term" value="P:negative regulation of DNA-templated transcription initiation"/>
    <property type="evidence" value="ECO:0007669"/>
    <property type="project" value="TreeGrafter"/>
</dbReference>
<dbReference type="CDD" id="cd16321">
    <property type="entry name" value="MraZ_C"/>
    <property type="match status" value="1"/>
</dbReference>
<dbReference type="CDD" id="cd16320">
    <property type="entry name" value="MraZ_N"/>
    <property type="match status" value="1"/>
</dbReference>
<dbReference type="Gene3D" id="3.40.1550.20">
    <property type="entry name" value="Transcriptional regulator MraZ domain"/>
    <property type="match status" value="1"/>
</dbReference>
<dbReference type="HAMAP" id="MF_01008">
    <property type="entry name" value="MraZ"/>
    <property type="match status" value="1"/>
</dbReference>
<dbReference type="InterPro" id="IPR003444">
    <property type="entry name" value="MraZ"/>
</dbReference>
<dbReference type="InterPro" id="IPR035644">
    <property type="entry name" value="MraZ_C"/>
</dbReference>
<dbReference type="InterPro" id="IPR020603">
    <property type="entry name" value="MraZ_dom"/>
</dbReference>
<dbReference type="InterPro" id="IPR035642">
    <property type="entry name" value="MraZ_N"/>
</dbReference>
<dbReference type="InterPro" id="IPR038619">
    <property type="entry name" value="MraZ_sf"/>
</dbReference>
<dbReference type="InterPro" id="IPR007159">
    <property type="entry name" value="SpoVT-AbrB_dom"/>
</dbReference>
<dbReference type="InterPro" id="IPR037914">
    <property type="entry name" value="SpoVT-AbrB_sf"/>
</dbReference>
<dbReference type="NCBIfam" id="TIGR00242">
    <property type="entry name" value="division/cell wall cluster transcriptional repressor MraZ"/>
    <property type="match status" value="1"/>
</dbReference>
<dbReference type="PANTHER" id="PTHR34701">
    <property type="entry name" value="TRANSCRIPTIONAL REGULATOR MRAZ"/>
    <property type="match status" value="1"/>
</dbReference>
<dbReference type="PANTHER" id="PTHR34701:SF1">
    <property type="entry name" value="TRANSCRIPTIONAL REGULATOR MRAZ"/>
    <property type="match status" value="1"/>
</dbReference>
<dbReference type="Pfam" id="PF02381">
    <property type="entry name" value="MraZ"/>
    <property type="match status" value="2"/>
</dbReference>
<dbReference type="SUPFAM" id="SSF89447">
    <property type="entry name" value="AbrB/MazE/MraZ-like"/>
    <property type="match status" value="1"/>
</dbReference>
<dbReference type="PROSITE" id="PS51740">
    <property type="entry name" value="SPOVT_ABRB"/>
    <property type="match status" value="2"/>
</dbReference>
<protein>
    <recommendedName>
        <fullName>Transcriptional regulator MraZ</fullName>
    </recommendedName>
</protein>
<accession>Q1BZH2</accession>
<proteinExistence type="inferred from homology"/>
<feature type="chain" id="PRO_1000062850" description="Transcriptional regulator MraZ">
    <location>
        <begin position="1"/>
        <end position="142"/>
    </location>
</feature>
<feature type="domain" description="SpoVT-AbrB 1" evidence="2">
    <location>
        <begin position="5"/>
        <end position="51"/>
    </location>
</feature>
<feature type="domain" description="SpoVT-AbrB 2" evidence="2">
    <location>
        <begin position="77"/>
        <end position="120"/>
    </location>
</feature>
<keyword id="KW-0963">Cytoplasm</keyword>
<keyword id="KW-0238">DNA-binding</keyword>
<keyword id="KW-0677">Repeat</keyword>
<keyword id="KW-0804">Transcription</keyword>
<keyword id="KW-0805">Transcription regulation</keyword>
<evidence type="ECO:0000255" key="1">
    <source>
        <dbReference type="HAMAP-Rule" id="MF_01008"/>
    </source>
</evidence>
<evidence type="ECO:0000255" key="2">
    <source>
        <dbReference type="PROSITE-ProRule" id="PRU01076"/>
    </source>
</evidence>
<sequence>MFQGASALTLDAKGRMSVPSRYREALQGQAEGRVTVTKHPDGCLLLFPRPEWEVFRAKIAALPMDAHWWRRIFLGNAMDVDLDSAGRILVSPELRMAAGLEKEVMLLGMGSHFELWDSQTYNAKEQAAMAQGMPDALKNFTF</sequence>
<name>MRAZ_BURO1</name>
<organism>
    <name type="scientific">Burkholderia orbicola (strain AU 1054)</name>
    <dbReference type="NCBI Taxonomy" id="331271"/>
    <lineage>
        <taxon>Bacteria</taxon>
        <taxon>Pseudomonadati</taxon>
        <taxon>Pseudomonadota</taxon>
        <taxon>Betaproteobacteria</taxon>
        <taxon>Burkholderiales</taxon>
        <taxon>Burkholderiaceae</taxon>
        <taxon>Burkholderia</taxon>
        <taxon>Burkholderia cepacia complex</taxon>
        <taxon>Burkholderia orbicola</taxon>
    </lineage>
</organism>
<reference key="1">
    <citation type="submission" date="2006-05" db="EMBL/GenBank/DDBJ databases">
        <title>Complete sequence of chromosome 1 of Burkholderia cenocepacia AU 1054.</title>
        <authorList>
            <consortium name="US DOE Joint Genome Institute"/>
            <person name="Copeland A."/>
            <person name="Lucas S."/>
            <person name="Lapidus A."/>
            <person name="Barry K."/>
            <person name="Detter J.C."/>
            <person name="Glavina del Rio T."/>
            <person name="Hammon N."/>
            <person name="Israni S."/>
            <person name="Dalin E."/>
            <person name="Tice H."/>
            <person name="Pitluck S."/>
            <person name="Chain P."/>
            <person name="Malfatti S."/>
            <person name="Shin M."/>
            <person name="Vergez L."/>
            <person name="Schmutz J."/>
            <person name="Larimer F."/>
            <person name="Land M."/>
            <person name="Hauser L."/>
            <person name="Kyrpides N."/>
            <person name="Lykidis A."/>
            <person name="LiPuma J.J."/>
            <person name="Konstantinidis K."/>
            <person name="Tiedje J.M."/>
            <person name="Richardson P."/>
        </authorList>
    </citation>
    <scope>NUCLEOTIDE SEQUENCE [LARGE SCALE GENOMIC DNA]</scope>
    <source>
        <strain>AU 1054</strain>
    </source>
</reference>
<comment type="subunit">
    <text evidence="1">Forms oligomers.</text>
</comment>
<comment type="subcellular location">
    <subcellularLocation>
        <location evidence="1">Cytoplasm</location>
        <location evidence="1">Nucleoid</location>
    </subcellularLocation>
</comment>
<comment type="similarity">
    <text evidence="1">Belongs to the MraZ family.</text>
</comment>
<gene>
    <name evidence="1" type="primary">mraZ</name>
    <name type="ordered locus">Bcen_0068</name>
</gene>